<gene>
    <name evidence="1" type="primary">uvrA</name>
    <name type="ordered locus">SP_0186</name>
</gene>
<accession>P63384</accession>
<accession>Q97SX7</accession>
<evidence type="ECO:0000255" key="1">
    <source>
        <dbReference type="HAMAP-Rule" id="MF_00205"/>
    </source>
</evidence>
<feature type="chain" id="PRO_0000093100" description="UvrABC system protein A">
    <location>
        <begin position="1"/>
        <end position="943"/>
    </location>
</feature>
<feature type="domain" description="ABC transporter 1" evidence="1">
    <location>
        <begin position="308"/>
        <end position="589"/>
    </location>
</feature>
<feature type="domain" description="ABC transporter 2" evidence="1">
    <location>
        <begin position="609"/>
        <end position="937"/>
    </location>
</feature>
<feature type="zinc finger region" description="C4-type" evidence="1">
    <location>
        <begin position="251"/>
        <end position="278"/>
    </location>
</feature>
<feature type="zinc finger region" description="C4-type" evidence="1">
    <location>
        <begin position="740"/>
        <end position="766"/>
    </location>
</feature>
<feature type="binding site" evidence="1">
    <location>
        <begin position="32"/>
        <end position="39"/>
    </location>
    <ligand>
        <name>ATP</name>
        <dbReference type="ChEBI" id="CHEBI:30616"/>
    </ligand>
</feature>
<feature type="binding site" evidence="1">
    <location>
        <begin position="641"/>
        <end position="648"/>
    </location>
    <ligand>
        <name>ATP</name>
        <dbReference type="ChEBI" id="CHEBI:30616"/>
    </ligand>
</feature>
<protein>
    <recommendedName>
        <fullName evidence="1">UvrABC system protein A</fullName>
        <shortName evidence="1">UvrA protein</shortName>
    </recommendedName>
    <alternativeName>
        <fullName evidence="1">Excinuclease ABC subunit A</fullName>
    </alternativeName>
</protein>
<comment type="function">
    <text evidence="1">The UvrABC repair system catalyzes the recognition and processing of DNA lesions. UvrA is an ATPase and a DNA-binding protein. A damage recognition complex composed of 2 UvrA and 2 UvrB subunits scans DNA for abnormalities. When the presence of a lesion has been verified by UvrB, the UvrA molecules dissociate.</text>
</comment>
<comment type="subunit">
    <text evidence="1">Forms a heterotetramer with UvrB during the search for lesions.</text>
</comment>
<comment type="subcellular location">
    <subcellularLocation>
        <location evidence="1">Cytoplasm</location>
    </subcellularLocation>
</comment>
<comment type="similarity">
    <text evidence="1">Belongs to the ABC transporter superfamily. UvrA family.</text>
</comment>
<dbReference type="EMBL" id="AE005672">
    <property type="protein sequence ID" value="AAK74367.1"/>
    <property type="molecule type" value="Genomic_DNA"/>
</dbReference>
<dbReference type="PIR" id="F95021">
    <property type="entry name" value="F95021"/>
</dbReference>
<dbReference type="RefSeq" id="WP_001152899.1">
    <property type="nucleotide sequence ID" value="NZ_CP155539.1"/>
</dbReference>
<dbReference type="SMR" id="P63384"/>
<dbReference type="PaxDb" id="170187-SP_0186"/>
<dbReference type="EnsemblBacteria" id="AAK74367">
    <property type="protein sequence ID" value="AAK74367"/>
    <property type="gene ID" value="SP_0186"/>
</dbReference>
<dbReference type="GeneID" id="45652326"/>
<dbReference type="KEGG" id="spn:SP_0186"/>
<dbReference type="eggNOG" id="COG0178">
    <property type="taxonomic scope" value="Bacteria"/>
</dbReference>
<dbReference type="PhylomeDB" id="P63384"/>
<dbReference type="BioCyc" id="SPNE170187:G1FZB-194-MONOMER"/>
<dbReference type="Proteomes" id="UP000000585">
    <property type="component" value="Chromosome"/>
</dbReference>
<dbReference type="GO" id="GO:0005737">
    <property type="term" value="C:cytoplasm"/>
    <property type="evidence" value="ECO:0007669"/>
    <property type="project" value="UniProtKB-SubCell"/>
</dbReference>
<dbReference type="GO" id="GO:0009380">
    <property type="term" value="C:excinuclease repair complex"/>
    <property type="evidence" value="ECO:0007669"/>
    <property type="project" value="InterPro"/>
</dbReference>
<dbReference type="GO" id="GO:0005524">
    <property type="term" value="F:ATP binding"/>
    <property type="evidence" value="ECO:0007669"/>
    <property type="project" value="UniProtKB-UniRule"/>
</dbReference>
<dbReference type="GO" id="GO:0016887">
    <property type="term" value="F:ATP hydrolysis activity"/>
    <property type="evidence" value="ECO:0007669"/>
    <property type="project" value="InterPro"/>
</dbReference>
<dbReference type="GO" id="GO:0003677">
    <property type="term" value="F:DNA binding"/>
    <property type="evidence" value="ECO:0007669"/>
    <property type="project" value="UniProtKB-UniRule"/>
</dbReference>
<dbReference type="GO" id="GO:0009381">
    <property type="term" value="F:excinuclease ABC activity"/>
    <property type="evidence" value="ECO:0007669"/>
    <property type="project" value="UniProtKB-UniRule"/>
</dbReference>
<dbReference type="GO" id="GO:0008270">
    <property type="term" value="F:zinc ion binding"/>
    <property type="evidence" value="ECO:0007669"/>
    <property type="project" value="UniProtKB-UniRule"/>
</dbReference>
<dbReference type="GO" id="GO:0006289">
    <property type="term" value="P:nucleotide-excision repair"/>
    <property type="evidence" value="ECO:0007669"/>
    <property type="project" value="UniProtKB-UniRule"/>
</dbReference>
<dbReference type="GO" id="GO:0009432">
    <property type="term" value="P:SOS response"/>
    <property type="evidence" value="ECO:0007669"/>
    <property type="project" value="UniProtKB-UniRule"/>
</dbReference>
<dbReference type="CDD" id="cd03270">
    <property type="entry name" value="ABC_UvrA_I"/>
    <property type="match status" value="1"/>
</dbReference>
<dbReference type="CDD" id="cd03271">
    <property type="entry name" value="ABC_UvrA_II"/>
    <property type="match status" value="1"/>
</dbReference>
<dbReference type="FunFam" id="1.20.1580.10:FF:000002">
    <property type="entry name" value="UvrABC system protein A"/>
    <property type="match status" value="1"/>
</dbReference>
<dbReference type="FunFam" id="3.40.50.300:FF:000028">
    <property type="entry name" value="UvrABC system protein A"/>
    <property type="match status" value="1"/>
</dbReference>
<dbReference type="Gene3D" id="1.10.8.280">
    <property type="entry name" value="ABC transporter ATPase domain-like"/>
    <property type="match status" value="1"/>
</dbReference>
<dbReference type="Gene3D" id="1.20.1580.10">
    <property type="entry name" value="ABC transporter ATPase like domain"/>
    <property type="match status" value="2"/>
</dbReference>
<dbReference type="Gene3D" id="3.30.1490.20">
    <property type="entry name" value="ATP-grasp fold, A domain"/>
    <property type="match status" value="1"/>
</dbReference>
<dbReference type="Gene3D" id="3.40.50.300">
    <property type="entry name" value="P-loop containing nucleotide triphosphate hydrolases"/>
    <property type="match status" value="2"/>
</dbReference>
<dbReference type="HAMAP" id="MF_00205">
    <property type="entry name" value="UvrA"/>
    <property type="match status" value="1"/>
</dbReference>
<dbReference type="InterPro" id="IPR003593">
    <property type="entry name" value="AAA+_ATPase"/>
</dbReference>
<dbReference type="InterPro" id="IPR003439">
    <property type="entry name" value="ABC_transporter-like_ATP-bd"/>
</dbReference>
<dbReference type="InterPro" id="IPR017871">
    <property type="entry name" value="ABC_transporter-like_CS"/>
</dbReference>
<dbReference type="InterPro" id="IPR013815">
    <property type="entry name" value="ATP_grasp_subdomain_1"/>
</dbReference>
<dbReference type="InterPro" id="IPR027417">
    <property type="entry name" value="P-loop_NTPase"/>
</dbReference>
<dbReference type="InterPro" id="IPR004602">
    <property type="entry name" value="UvrA"/>
</dbReference>
<dbReference type="InterPro" id="IPR041552">
    <property type="entry name" value="UvrA_DNA-bd"/>
</dbReference>
<dbReference type="InterPro" id="IPR041102">
    <property type="entry name" value="UvrA_inter"/>
</dbReference>
<dbReference type="NCBIfam" id="NF001503">
    <property type="entry name" value="PRK00349.1"/>
    <property type="match status" value="1"/>
</dbReference>
<dbReference type="NCBIfam" id="TIGR00630">
    <property type="entry name" value="uvra"/>
    <property type="match status" value="1"/>
</dbReference>
<dbReference type="PANTHER" id="PTHR43152">
    <property type="entry name" value="UVRABC SYSTEM PROTEIN A"/>
    <property type="match status" value="1"/>
</dbReference>
<dbReference type="PANTHER" id="PTHR43152:SF3">
    <property type="entry name" value="UVRABC SYSTEM PROTEIN A"/>
    <property type="match status" value="1"/>
</dbReference>
<dbReference type="Pfam" id="PF17755">
    <property type="entry name" value="UvrA_DNA-bind"/>
    <property type="match status" value="1"/>
</dbReference>
<dbReference type="Pfam" id="PF17760">
    <property type="entry name" value="UvrA_inter"/>
    <property type="match status" value="1"/>
</dbReference>
<dbReference type="SMART" id="SM00382">
    <property type="entry name" value="AAA"/>
    <property type="match status" value="2"/>
</dbReference>
<dbReference type="SUPFAM" id="SSF52540">
    <property type="entry name" value="P-loop containing nucleoside triphosphate hydrolases"/>
    <property type="match status" value="2"/>
</dbReference>
<dbReference type="PROSITE" id="PS00211">
    <property type="entry name" value="ABC_TRANSPORTER_1"/>
    <property type="match status" value="2"/>
</dbReference>
<dbReference type="PROSITE" id="PS50893">
    <property type="entry name" value="ABC_TRANSPORTER_2"/>
    <property type="match status" value="1"/>
</dbReference>
<sequence>MQDKIVIHGARAHNLKNIDVEIPRDKLVVVTGLSGSGKSSLAFDTLYAEGQRRYVESLSAYARQFLGNMEKPDVDAIDGLSPAISIDQKTTSKNPRSTVGTTTEINDYLRLLYARVGTPYCINGHGAINASSVEQIVDKVLELPERQRLQILAPVIRKKKGQHKSVIEKVQKDGYVRVRVDGEVYDVTEVPELSKSKQHNIDVVVDRIVIKEGIRSRLFDSIEAALRIAEGYVIIDTMDDSELLFSEHYACPVCGFTVPELEPRLFSFNAPFGSCSECDGLGIKLEVDTDLVVPDASKTLREGALAPWNPISSNYYPNMLEQAMKVFGVAMDKPFEDLSEEDKNLILYGSDGKEFHFHYENEFGGVRDIDIPFEGVINNIKRRYHETNSDYTRTQMRLYMNELTCGTCQGYRLNDQALSVRVGGQQGPHIGEISDLSIADHLDLVSQLTLSENEAIIARPILKEIKDRLTFLNNVGLNYLTLSRSAGTLSGGESQRIRLATQIGSNLSGVLYILDEPSIGLHQRDNDRLIASLKKMRDLGNTLIVVEHDEDTMREADYLIDVGPGAGVFGGEIVAAGTPKQVARNSKSITGQYLSGKRVIPVPEERRVGNGRFIEVIGARENNLQNVTARFPLGKFIAVTGVSGSGKSTLINSILKKAIAQKLNRNSDKPGKFKTITGIEHVDRLIDIDQSPIGRTPRSNPATYTGVFDDIRDLFAQTNEAKIRGYKKGRFSFNVKGGRCEACSGDGIIKIEMHFLPDVYVACEVCHGTRYNSETLEVHYKEKNISQVLDMTVNDAVEFFQHIPKIQRKLQTIKDVGLGYVTLGQPATTLSGGEAQRMKLASELHKRSTGKSFYILDEPTTGLHTEDIARLLKVLARFVDDGNTVLVIEHNLDVIKTADHIIDLGPEGGVGGGTIIVTGTPEEVAANEASYTGHYLKGKLHHE</sequence>
<proteinExistence type="inferred from homology"/>
<organism>
    <name type="scientific">Streptococcus pneumoniae serotype 4 (strain ATCC BAA-334 / TIGR4)</name>
    <dbReference type="NCBI Taxonomy" id="170187"/>
    <lineage>
        <taxon>Bacteria</taxon>
        <taxon>Bacillati</taxon>
        <taxon>Bacillota</taxon>
        <taxon>Bacilli</taxon>
        <taxon>Lactobacillales</taxon>
        <taxon>Streptococcaceae</taxon>
        <taxon>Streptococcus</taxon>
    </lineage>
</organism>
<keyword id="KW-0067">ATP-binding</keyword>
<keyword id="KW-0963">Cytoplasm</keyword>
<keyword id="KW-0227">DNA damage</keyword>
<keyword id="KW-0228">DNA excision</keyword>
<keyword id="KW-0234">DNA repair</keyword>
<keyword id="KW-0238">DNA-binding</keyword>
<keyword id="KW-0267">Excision nuclease</keyword>
<keyword id="KW-0479">Metal-binding</keyword>
<keyword id="KW-0547">Nucleotide-binding</keyword>
<keyword id="KW-1185">Reference proteome</keyword>
<keyword id="KW-0677">Repeat</keyword>
<keyword id="KW-0742">SOS response</keyword>
<keyword id="KW-0862">Zinc</keyword>
<keyword id="KW-0863">Zinc-finger</keyword>
<name>UVRA_STRPN</name>
<reference key="1">
    <citation type="journal article" date="2001" name="Science">
        <title>Complete genome sequence of a virulent isolate of Streptococcus pneumoniae.</title>
        <authorList>
            <person name="Tettelin H."/>
            <person name="Nelson K.E."/>
            <person name="Paulsen I.T."/>
            <person name="Eisen J.A."/>
            <person name="Read T.D."/>
            <person name="Peterson S.N."/>
            <person name="Heidelberg J.F."/>
            <person name="DeBoy R.T."/>
            <person name="Haft D.H."/>
            <person name="Dodson R.J."/>
            <person name="Durkin A.S."/>
            <person name="Gwinn M.L."/>
            <person name="Kolonay J.F."/>
            <person name="Nelson W.C."/>
            <person name="Peterson J.D."/>
            <person name="Umayam L.A."/>
            <person name="White O."/>
            <person name="Salzberg S.L."/>
            <person name="Lewis M.R."/>
            <person name="Radune D."/>
            <person name="Holtzapple E.K."/>
            <person name="Khouri H.M."/>
            <person name="Wolf A.M."/>
            <person name="Utterback T.R."/>
            <person name="Hansen C.L."/>
            <person name="McDonald L.A."/>
            <person name="Feldblyum T.V."/>
            <person name="Angiuoli S.V."/>
            <person name="Dickinson T."/>
            <person name="Hickey E.K."/>
            <person name="Holt I.E."/>
            <person name="Loftus B.J."/>
            <person name="Yang F."/>
            <person name="Smith H.O."/>
            <person name="Venter J.C."/>
            <person name="Dougherty B.A."/>
            <person name="Morrison D.A."/>
            <person name="Hollingshead S.K."/>
            <person name="Fraser C.M."/>
        </authorList>
    </citation>
    <scope>NUCLEOTIDE SEQUENCE [LARGE SCALE GENOMIC DNA]</scope>
    <source>
        <strain>ATCC BAA-334 / TIGR4</strain>
    </source>
</reference>